<protein>
    <recommendedName>
        <fullName evidence="1">Glucose-6-phosphate isomerase</fullName>
        <shortName evidence="1">GPI</shortName>
        <ecNumber evidence="1">5.3.1.9</ecNumber>
    </recommendedName>
    <alternativeName>
        <fullName evidence="1">Phosphoglucose isomerase</fullName>
        <shortName evidence="1">PGI</shortName>
    </alternativeName>
    <alternativeName>
        <fullName evidence="1">Phosphohexose isomerase</fullName>
        <shortName evidence="1">PHI</shortName>
    </alternativeName>
</protein>
<accession>P81181</accession>
<reference key="1">
    <citation type="journal article" date="2001" name="Genome Res.">
        <title>The complete genome sequence of the lactic acid bacterium Lactococcus lactis ssp. lactis IL1403.</title>
        <authorList>
            <person name="Bolotin A."/>
            <person name="Wincker P."/>
            <person name="Mauger S."/>
            <person name="Jaillon O."/>
            <person name="Malarme K."/>
            <person name="Weissenbach J."/>
            <person name="Ehrlich S.D."/>
            <person name="Sorokin A."/>
        </authorList>
    </citation>
    <scope>NUCLEOTIDE SEQUENCE [LARGE SCALE GENOMIC DNA]</scope>
    <source>
        <strain>IL1403</strain>
    </source>
</reference>
<reference key="2">
    <citation type="journal article" date="1997" name="Arch. Biochem. Biophys.">
        <title>The N-terminal sequence of Lactococcus lactis phosphoglucose isomerase purified by affinity chromatography differs from the other species.</title>
        <authorList>
            <person name="Nomura M."/>
            <person name="Nakajima I."/>
            <person name="Matsuzaki M."/>
            <person name="Kimoto H."/>
            <person name="Suzuki I."/>
            <person name="Aso H."/>
        </authorList>
    </citation>
    <scope>PROTEIN SEQUENCE OF 2-20</scope>
</reference>
<evidence type="ECO:0000255" key="1">
    <source>
        <dbReference type="HAMAP-Rule" id="MF_00473"/>
    </source>
</evidence>
<evidence type="ECO:0000269" key="2">
    <source>
    </source>
</evidence>
<evidence type="ECO:0000305" key="3"/>
<dbReference type="EC" id="5.3.1.9" evidence="1"/>
<dbReference type="EMBL" id="AE005176">
    <property type="protein sequence ID" value="AAK06266.1"/>
    <property type="molecule type" value="Genomic_DNA"/>
</dbReference>
<dbReference type="PIR" id="H86895">
    <property type="entry name" value="H86895"/>
</dbReference>
<dbReference type="RefSeq" id="NP_268325.1">
    <property type="nucleotide sequence ID" value="NC_002662.1"/>
</dbReference>
<dbReference type="RefSeq" id="WP_010906353.1">
    <property type="nucleotide sequence ID" value="NC_002662.1"/>
</dbReference>
<dbReference type="SMR" id="P81181"/>
<dbReference type="PaxDb" id="272623-L0012"/>
<dbReference type="EnsemblBacteria" id="AAK06266">
    <property type="protein sequence ID" value="AAK06266"/>
    <property type="gene ID" value="L0012"/>
</dbReference>
<dbReference type="KEGG" id="lla:L0012"/>
<dbReference type="PATRIC" id="fig|272623.7.peg.2328"/>
<dbReference type="eggNOG" id="COG0166">
    <property type="taxonomic scope" value="Bacteria"/>
</dbReference>
<dbReference type="HOGENOM" id="CLU_037303_0_1_9"/>
<dbReference type="OrthoDB" id="140919at2"/>
<dbReference type="BioCyc" id="MetaCyc:MONOMER-13046"/>
<dbReference type="SABIO-RK" id="P81181"/>
<dbReference type="UniPathway" id="UPA00109">
    <property type="reaction ID" value="UER00181"/>
</dbReference>
<dbReference type="UniPathway" id="UPA00138"/>
<dbReference type="Proteomes" id="UP000002196">
    <property type="component" value="Chromosome"/>
</dbReference>
<dbReference type="GO" id="GO:0005829">
    <property type="term" value="C:cytosol"/>
    <property type="evidence" value="ECO:0007669"/>
    <property type="project" value="TreeGrafter"/>
</dbReference>
<dbReference type="GO" id="GO:0097367">
    <property type="term" value="F:carbohydrate derivative binding"/>
    <property type="evidence" value="ECO:0007669"/>
    <property type="project" value="InterPro"/>
</dbReference>
<dbReference type="GO" id="GO:0004347">
    <property type="term" value="F:glucose-6-phosphate isomerase activity"/>
    <property type="evidence" value="ECO:0007669"/>
    <property type="project" value="UniProtKB-UniRule"/>
</dbReference>
<dbReference type="GO" id="GO:0048029">
    <property type="term" value="F:monosaccharide binding"/>
    <property type="evidence" value="ECO:0007669"/>
    <property type="project" value="TreeGrafter"/>
</dbReference>
<dbReference type="GO" id="GO:0006094">
    <property type="term" value="P:gluconeogenesis"/>
    <property type="evidence" value="ECO:0007669"/>
    <property type="project" value="UniProtKB-UniRule"/>
</dbReference>
<dbReference type="GO" id="GO:0051156">
    <property type="term" value="P:glucose 6-phosphate metabolic process"/>
    <property type="evidence" value="ECO:0007669"/>
    <property type="project" value="TreeGrafter"/>
</dbReference>
<dbReference type="GO" id="GO:0006096">
    <property type="term" value="P:glycolytic process"/>
    <property type="evidence" value="ECO:0007669"/>
    <property type="project" value="UniProtKB-UniRule"/>
</dbReference>
<dbReference type="CDD" id="cd05015">
    <property type="entry name" value="SIS_PGI_1"/>
    <property type="match status" value="1"/>
</dbReference>
<dbReference type="CDD" id="cd05016">
    <property type="entry name" value="SIS_PGI_2"/>
    <property type="match status" value="1"/>
</dbReference>
<dbReference type="FunFam" id="3.40.50.10490:FF:000015">
    <property type="entry name" value="Glucose-6-phosphate isomerase"/>
    <property type="match status" value="1"/>
</dbReference>
<dbReference type="FunFam" id="3.40.50.10490:FF:000016">
    <property type="entry name" value="Glucose-6-phosphate isomerase"/>
    <property type="match status" value="1"/>
</dbReference>
<dbReference type="Gene3D" id="3.40.50.10490">
    <property type="entry name" value="Glucose-6-phosphate isomerase like protein, domain 1"/>
    <property type="match status" value="3"/>
</dbReference>
<dbReference type="HAMAP" id="MF_00473">
    <property type="entry name" value="G6P_isomerase"/>
    <property type="match status" value="1"/>
</dbReference>
<dbReference type="InterPro" id="IPR001672">
    <property type="entry name" value="G6P_Isomerase"/>
</dbReference>
<dbReference type="InterPro" id="IPR018189">
    <property type="entry name" value="Phosphoglucose_isomerase_CS"/>
</dbReference>
<dbReference type="InterPro" id="IPR046348">
    <property type="entry name" value="SIS_dom_sf"/>
</dbReference>
<dbReference type="InterPro" id="IPR035476">
    <property type="entry name" value="SIS_PGI_1"/>
</dbReference>
<dbReference type="InterPro" id="IPR035482">
    <property type="entry name" value="SIS_PGI_2"/>
</dbReference>
<dbReference type="NCBIfam" id="NF010697">
    <property type="entry name" value="PRK14097.1"/>
    <property type="match status" value="1"/>
</dbReference>
<dbReference type="PANTHER" id="PTHR11469">
    <property type="entry name" value="GLUCOSE-6-PHOSPHATE ISOMERASE"/>
    <property type="match status" value="1"/>
</dbReference>
<dbReference type="PANTHER" id="PTHR11469:SF1">
    <property type="entry name" value="GLUCOSE-6-PHOSPHATE ISOMERASE"/>
    <property type="match status" value="1"/>
</dbReference>
<dbReference type="Pfam" id="PF00342">
    <property type="entry name" value="PGI"/>
    <property type="match status" value="1"/>
</dbReference>
<dbReference type="PRINTS" id="PR00662">
    <property type="entry name" value="G6PISOMERASE"/>
</dbReference>
<dbReference type="SUPFAM" id="SSF53697">
    <property type="entry name" value="SIS domain"/>
    <property type="match status" value="1"/>
</dbReference>
<dbReference type="PROSITE" id="PS00765">
    <property type="entry name" value="P_GLUCOSE_ISOMERASE_1"/>
    <property type="match status" value="1"/>
</dbReference>
<dbReference type="PROSITE" id="PS00174">
    <property type="entry name" value="P_GLUCOSE_ISOMERASE_2"/>
    <property type="match status" value="1"/>
</dbReference>
<dbReference type="PROSITE" id="PS51463">
    <property type="entry name" value="P_GLUCOSE_ISOMERASE_3"/>
    <property type="match status" value="1"/>
</dbReference>
<feature type="initiator methionine" description="Removed" evidence="2">
    <location>
        <position position="1"/>
    </location>
</feature>
<feature type="chain" id="PRO_0000180660" description="Glucose-6-phosphate isomerase">
    <location>
        <begin position="2"/>
        <end position="448"/>
    </location>
</feature>
<feature type="active site" description="Proton donor" evidence="1">
    <location>
        <position position="290"/>
    </location>
</feature>
<feature type="active site" evidence="1">
    <location>
        <position position="311"/>
    </location>
</feature>
<feature type="active site" evidence="1">
    <location>
        <position position="425"/>
    </location>
</feature>
<comment type="function">
    <text evidence="1">Catalyzes the reversible isomerization of glucose-6-phosphate to fructose-6-phosphate.</text>
</comment>
<comment type="catalytic activity">
    <reaction evidence="1">
        <text>alpha-D-glucose 6-phosphate = beta-D-fructose 6-phosphate</text>
        <dbReference type="Rhea" id="RHEA:11816"/>
        <dbReference type="ChEBI" id="CHEBI:57634"/>
        <dbReference type="ChEBI" id="CHEBI:58225"/>
        <dbReference type="EC" id="5.3.1.9"/>
    </reaction>
</comment>
<comment type="pathway">
    <text evidence="1">Carbohydrate biosynthesis; gluconeogenesis.</text>
</comment>
<comment type="pathway">
    <text evidence="1">Carbohydrate degradation; glycolysis; D-glyceraldehyde 3-phosphate and glycerone phosphate from D-glucose: step 2/4.</text>
</comment>
<comment type="subcellular location">
    <subcellularLocation>
        <location evidence="1">Cytoplasm</location>
    </subcellularLocation>
</comment>
<comment type="similarity">
    <text evidence="1 3">Belongs to the GPI family.</text>
</comment>
<sequence>MAHIKFDYSKLTPFVAENELDEIQWQIDGAAKLLHEGKGAGSDYIGWLDLPEDYDKEEFARIQKAAKKIQSDSEVLIVIGIGGSYLGARAAIDFLSNSFVNLQTAEERKAPRILYAGNSISSSYLADLVDYVADKDFSVNVISKSGTTTEPAIAFRVFEEMLVKKYGREEANKRIYATTDKEKGAVKVNADANNWETFVVPDSVGGRFSVLTAVGLLPIAASGADITALMEGANAARKEYTSTNVHENDAYAYAALRNILYRKGKFSEILINYEPSLQYFSEWWKQLAGESEGKDQKGIYPTSANFSTDLHSLGQWIQEGTRTVFETAIRIEKPRKNINIPELDADLDGLGYLQGKDVDFVNKKAADGVLLAHTDGNVPNMIVTLPEQDEFTLGYAIYFFELAIGVSGYLNGINPFNQPGVEAYKKNMFALLGKPGFEELSKELNDRL</sequence>
<keyword id="KW-0963">Cytoplasm</keyword>
<keyword id="KW-0903">Direct protein sequencing</keyword>
<keyword id="KW-0312">Gluconeogenesis</keyword>
<keyword id="KW-0324">Glycolysis</keyword>
<keyword id="KW-0413">Isomerase</keyword>
<keyword id="KW-1185">Reference proteome</keyword>
<gene>
    <name evidence="1" type="primary">pgi</name>
    <name type="synonym">pgiA</name>
    <name type="ordered locus">LL2168</name>
    <name type="ORF">L0012</name>
</gene>
<organism>
    <name type="scientific">Lactococcus lactis subsp. lactis (strain IL1403)</name>
    <name type="common">Streptococcus lactis</name>
    <dbReference type="NCBI Taxonomy" id="272623"/>
    <lineage>
        <taxon>Bacteria</taxon>
        <taxon>Bacillati</taxon>
        <taxon>Bacillota</taxon>
        <taxon>Bacilli</taxon>
        <taxon>Lactobacillales</taxon>
        <taxon>Streptococcaceae</taxon>
        <taxon>Lactococcus</taxon>
    </lineage>
</organism>
<name>G6PI_LACLA</name>
<proteinExistence type="evidence at protein level"/>